<reference key="1">
    <citation type="journal article" date="1994" name="Nature">
        <title>2.2 Mb of contiguous nucleotide sequence from chromosome III of C. elegans.</title>
        <authorList>
            <person name="Wilson R."/>
            <person name="Ainscough R."/>
            <person name="Anderson K."/>
            <person name="Baynes C."/>
            <person name="Berks M."/>
            <person name="Bonfield J."/>
            <person name="Burton J."/>
            <person name="Connell M."/>
            <person name="Copsey T."/>
            <person name="Cooper J."/>
            <person name="Coulson A."/>
            <person name="Craxton M."/>
            <person name="Dear S."/>
            <person name="Du Z."/>
            <person name="Durbin R."/>
            <person name="Favello A."/>
            <person name="Fraser A."/>
            <person name="Fulton L."/>
            <person name="Gardner A."/>
            <person name="Green P."/>
            <person name="Hawkins T."/>
            <person name="Hillier L."/>
            <person name="Jier M."/>
            <person name="Johnston L."/>
            <person name="Jones M."/>
            <person name="Kershaw J."/>
            <person name="Kirsten J."/>
            <person name="Laisster N."/>
            <person name="Latreille P."/>
            <person name="Lightning J."/>
            <person name="Lloyd C."/>
            <person name="Mortimore B."/>
            <person name="O'Callaghan M."/>
            <person name="Parsons J."/>
            <person name="Percy C."/>
            <person name="Rifken L."/>
            <person name="Roopra A."/>
            <person name="Saunders D."/>
            <person name="Shownkeen R."/>
            <person name="Sims M."/>
            <person name="Smaldon N."/>
            <person name="Smith A."/>
            <person name="Smith M."/>
            <person name="Sonnhammer E."/>
            <person name="Staden R."/>
            <person name="Sulston J."/>
            <person name="Thierry-Mieg J."/>
            <person name="Thomas K."/>
            <person name="Vaudin M."/>
            <person name="Vaughan K."/>
            <person name="Waterston R."/>
            <person name="Watson A."/>
            <person name="Weinstock L."/>
            <person name="Wilkinson-Sproat J."/>
            <person name="Wohldman P."/>
        </authorList>
    </citation>
    <scope>NUCLEOTIDE SEQUENCE [LARGE SCALE GENOMIC DNA]</scope>
    <source>
        <strain>Bristol N2</strain>
    </source>
</reference>
<reference key="2">
    <citation type="journal article" date="1998" name="Science">
        <title>Genome sequence of the nematode C. elegans: a platform for investigating biology.</title>
        <authorList>
            <consortium name="The C. elegans sequencing consortium"/>
        </authorList>
    </citation>
    <scope>NUCLEOTIDE SEQUENCE [LARGE SCALE GENOMIC DNA]</scope>
    <source>
        <strain>Bristol N2</strain>
    </source>
</reference>
<protein>
    <recommendedName>
        <fullName evidence="2">Small ribosomal subunit protein eS24</fullName>
    </recommendedName>
    <alternativeName>
        <fullName>Uncharacterized protein T26G10.3</fullName>
    </alternativeName>
</protein>
<name>YN23_CAEEL</name>
<organism>
    <name type="scientific">Caenorhabditis elegans</name>
    <dbReference type="NCBI Taxonomy" id="6239"/>
    <lineage>
        <taxon>Eukaryota</taxon>
        <taxon>Metazoa</taxon>
        <taxon>Ecdysozoa</taxon>
        <taxon>Nematoda</taxon>
        <taxon>Chromadorea</taxon>
        <taxon>Rhabditida</taxon>
        <taxon>Rhabditina</taxon>
        <taxon>Rhabditomorpha</taxon>
        <taxon>Rhabditoidea</taxon>
        <taxon>Rhabditidae</taxon>
        <taxon>Peloderinae</taxon>
        <taxon>Caenorhabditis</taxon>
    </lineage>
</organism>
<proteinExistence type="inferred from homology"/>
<gene>
    <name evidence="3" type="ORF">T26G10.3</name>
</gene>
<feature type="chain" id="PRO_0000137637" description="Small ribosomal subunit protein eS24">
    <location>
        <begin position="1"/>
        <end position="91"/>
    </location>
</feature>
<feature type="region of interest" description="Disordered" evidence="1">
    <location>
        <begin position="51"/>
        <end position="91"/>
    </location>
</feature>
<sequence>MVAEVILPGRPTTLKADIREKIANFYNINPDTMAKNTPLSQDDKVAKTVEQRRKDAAAHKEAYNAMPEAERRHLNSEKYANRKAEVSYKHR</sequence>
<evidence type="ECO:0000256" key="1">
    <source>
        <dbReference type="SAM" id="MobiDB-lite"/>
    </source>
</evidence>
<evidence type="ECO:0000305" key="2"/>
<evidence type="ECO:0000312" key="3">
    <source>
        <dbReference type="WormBase" id="T26G10.3"/>
    </source>
</evidence>
<dbReference type="EMBL" id="BX284603">
    <property type="protein sequence ID" value="CAA82363.2"/>
    <property type="molecule type" value="Genomic_DNA"/>
</dbReference>
<dbReference type="PIR" id="S40732">
    <property type="entry name" value="S40732"/>
</dbReference>
<dbReference type="RefSeq" id="NP_001366677.1">
    <property type="nucleotide sequence ID" value="NM_001379859.1"/>
</dbReference>
<dbReference type="RefSeq" id="NP_499070.1">
    <property type="nucleotide sequence ID" value="NM_066669.1"/>
</dbReference>
<dbReference type="SMR" id="P34582"/>
<dbReference type="STRING" id="6239.T26G10.3.1"/>
<dbReference type="PaxDb" id="6239-T26G10.3"/>
<dbReference type="EnsemblMetazoa" id="T26G10.3.1">
    <property type="protein sequence ID" value="T26G10.3.1"/>
    <property type="gene ID" value="WBGene00012060"/>
</dbReference>
<dbReference type="GeneID" id="188943"/>
<dbReference type="UCSC" id="T26G10.3">
    <property type="organism name" value="c. elegans"/>
</dbReference>
<dbReference type="AGR" id="WB:WBGene00012060"/>
<dbReference type="WormBase" id="T26G10.3">
    <property type="protein sequence ID" value="CE54147"/>
    <property type="gene ID" value="WBGene00012060"/>
</dbReference>
<dbReference type="HOGENOM" id="CLU_2429053_0_0_1"/>
<dbReference type="InParanoid" id="P34582"/>
<dbReference type="PRO" id="PR:P34582"/>
<dbReference type="Proteomes" id="UP000001940">
    <property type="component" value="Chromosome III"/>
</dbReference>
<dbReference type="Bgee" id="WBGene00012060">
    <property type="expression patterns" value="Expressed in embryo"/>
</dbReference>
<dbReference type="GO" id="GO:1990904">
    <property type="term" value="C:ribonucleoprotein complex"/>
    <property type="evidence" value="ECO:0007669"/>
    <property type="project" value="UniProtKB-KW"/>
</dbReference>
<dbReference type="GO" id="GO:0005840">
    <property type="term" value="C:ribosome"/>
    <property type="evidence" value="ECO:0007669"/>
    <property type="project" value="UniProtKB-KW"/>
</dbReference>
<dbReference type="GO" id="GO:0003735">
    <property type="term" value="F:structural constituent of ribosome"/>
    <property type="evidence" value="ECO:0007669"/>
    <property type="project" value="InterPro"/>
</dbReference>
<dbReference type="GO" id="GO:0006412">
    <property type="term" value="P:translation"/>
    <property type="evidence" value="ECO:0007669"/>
    <property type="project" value="InterPro"/>
</dbReference>
<dbReference type="InterPro" id="IPR001976">
    <property type="entry name" value="Ribosomal_eS24"/>
</dbReference>
<dbReference type="Pfam" id="PF01282">
    <property type="entry name" value="Ribosomal_S24e"/>
    <property type="match status" value="1"/>
</dbReference>
<comment type="similarity">
    <text evidence="2">Belongs to the eukaryotic ribosomal protein eS24 family.</text>
</comment>
<accession>P34582</accession>
<keyword id="KW-1185">Reference proteome</keyword>
<keyword id="KW-0687">Ribonucleoprotein</keyword>
<keyword id="KW-0689">Ribosomal protein</keyword>